<comment type="tissue specificity">
    <text>Stamen.</text>
</comment>
<accession>Q04189</accession>
<gene>
    <name type="primary">TAP1</name>
</gene>
<protein>
    <recommendedName>
        <fullName>Protein TAP1</fullName>
    </recommendedName>
</protein>
<feature type="signal peptide" evidence="1">
    <location>
        <begin position="1"/>
        <end position="23"/>
    </location>
</feature>
<feature type="chain" id="PRO_0000022470" description="Protein TAP1">
    <location>
        <begin position="24"/>
        <end position="107"/>
    </location>
</feature>
<keyword id="KW-0732">Signal</keyword>
<dbReference type="EMBL" id="X57295">
    <property type="protein sequence ID" value="CAA40552.1"/>
    <property type="molecule type" value="Genomic_DNA"/>
</dbReference>
<dbReference type="PIR" id="S17698">
    <property type="entry name" value="S17698"/>
</dbReference>
<dbReference type="SMR" id="Q04189"/>
<dbReference type="InterPro" id="IPR038975">
    <property type="entry name" value="THNL"/>
</dbReference>
<dbReference type="PANTHER" id="PTHR36312:SF5">
    <property type="entry name" value="PROTEIN TAP1-LIKE"/>
    <property type="match status" value="1"/>
</dbReference>
<dbReference type="PANTHER" id="PTHR36312">
    <property type="entry name" value="THIONIN-LIKE PROTEIN 1"/>
    <property type="match status" value="1"/>
</dbReference>
<evidence type="ECO:0000255" key="1"/>
<reference key="1">
    <citation type="journal article" date="1991" name="Mol. Gen. Genet.">
        <title>Molecular characterization of two stamen-specific genes, tap1 and fil1, that are expressed in the wild type, but not in the deficiens mutant of Antirrhinum majus.</title>
        <authorList>
            <person name="Nacken W.K.F."/>
            <person name="Huijser P."/>
            <person name="Beltran J.-P."/>
            <person name="Saedler H."/>
            <person name="Sommer H."/>
        </authorList>
    </citation>
    <scope>NUCLEOTIDE SEQUENCE [GENOMIC DNA]</scope>
    <source>
        <strain>cv. Sippe 50</strain>
    </source>
</reference>
<sequence length="107" mass="11895">MESKRVDVLVGLMLIMAIFGVHSVTAHLPPGICIDHCMKECKLSGIGVVACIKYCPVHCLPPDSSSKEHFCNLGCMLDKCAKFNDDEKKMSDCVFDCRKFHCKINTD</sequence>
<proteinExistence type="evidence at transcript level"/>
<name>TAP1_ANTMA</name>
<organism>
    <name type="scientific">Antirrhinum majus</name>
    <name type="common">Garden snapdragon</name>
    <dbReference type="NCBI Taxonomy" id="4151"/>
    <lineage>
        <taxon>Eukaryota</taxon>
        <taxon>Viridiplantae</taxon>
        <taxon>Streptophyta</taxon>
        <taxon>Embryophyta</taxon>
        <taxon>Tracheophyta</taxon>
        <taxon>Spermatophyta</taxon>
        <taxon>Magnoliopsida</taxon>
        <taxon>eudicotyledons</taxon>
        <taxon>Gunneridae</taxon>
        <taxon>Pentapetalae</taxon>
        <taxon>asterids</taxon>
        <taxon>lamiids</taxon>
        <taxon>Lamiales</taxon>
        <taxon>Plantaginaceae</taxon>
        <taxon>Antirrhineae</taxon>
        <taxon>Antirrhinum</taxon>
    </lineage>
</organism>